<gene>
    <name type="primary">LINGO1</name>
    <name type="synonym">LERN1</name>
    <name type="synonym">LRRN6A</name>
    <name type="ORF">UNQ201/PRO227</name>
</gene>
<proteinExistence type="evidence at protein level"/>
<organism>
    <name type="scientific">Homo sapiens</name>
    <name type="common">Human</name>
    <dbReference type="NCBI Taxonomy" id="9606"/>
    <lineage>
        <taxon>Eukaryota</taxon>
        <taxon>Metazoa</taxon>
        <taxon>Chordata</taxon>
        <taxon>Craniata</taxon>
        <taxon>Vertebrata</taxon>
        <taxon>Euteleostomi</taxon>
        <taxon>Mammalia</taxon>
        <taxon>Eutheria</taxon>
        <taxon>Euarchontoglires</taxon>
        <taxon>Primates</taxon>
        <taxon>Haplorrhini</taxon>
        <taxon>Catarrhini</taxon>
        <taxon>Hominidae</taxon>
        <taxon>Homo</taxon>
    </lineage>
</organism>
<keyword id="KW-0002">3D-structure</keyword>
<keyword id="KW-0025">Alternative splicing</keyword>
<keyword id="KW-1003">Cell membrane</keyword>
<keyword id="KW-0225">Disease variant</keyword>
<keyword id="KW-1015">Disulfide bond</keyword>
<keyword id="KW-0325">Glycoprotein</keyword>
<keyword id="KW-0393">Immunoglobulin domain</keyword>
<keyword id="KW-0991">Intellectual disability</keyword>
<keyword id="KW-0433">Leucine-rich repeat</keyword>
<keyword id="KW-0472">Membrane</keyword>
<keyword id="KW-0597">Phosphoprotein</keyword>
<keyword id="KW-1267">Proteomics identification</keyword>
<keyword id="KW-1185">Reference proteome</keyword>
<keyword id="KW-0677">Repeat</keyword>
<keyword id="KW-0732">Signal</keyword>
<keyword id="KW-0812">Transmembrane</keyword>
<keyword id="KW-1133">Transmembrane helix</keyword>
<comment type="function">
    <text evidence="1 5 6 7">Functional component of the Nogo receptor signaling complex (RTN4R/NGFR) in RhoA activation responsible for some inhibition of axonal regeneration by myelin-associated factors (PubMed:14966521, PubMed:15694321). Is also an important negative regulator of oligodentrocyte differentiation and axonal myelination (PubMed:15895088). Acts in conjunction with RTN4 and RTN4R in regulating neuronal precursor cell motility during cortical development (By similarity).</text>
</comment>
<comment type="subunit">
    <text evidence="1 5 6 8 10">Homotetramer (PubMed:17005555). Forms a ternary complex with RTN4R/NGFR and RTN4R/TNFRSF19 (PubMed:14966521, PubMed:15694321, PubMed:17005555). Interacts with NGRF and MYT1L (By similarity). Interacts with RTN4R (PubMed:19052207).</text>
</comment>
<comment type="interaction">
    <interactant intactId="EBI-719955">
        <id>Q96FE5</id>
    </interactant>
    <interactant intactId="EBI-77613">
        <id>P05067</id>
        <label>APP</label>
    </interactant>
    <organismsDiffer>false</organismsDiffer>
    <experiments>3</experiments>
</comment>
<comment type="interaction">
    <interactant intactId="EBI-719955">
        <id>Q96FE5</id>
    </interactant>
    <interactant intactId="EBI-302641">
        <id>P05067-4</id>
        <label>APP</label>
    </interactant>
    <organismsDiffer>false</organismsDiffer>
    <experiments>2</experiments>
</comment>
<comment type="interaction">
    <interactant intactId="EBI-719955">
        <id>Q96FE5</id>
    </interactant>
    <interactant intactId="EBI-297353">
        <id>P00533</id>
        <label>EGFR</label>
    </interactant>
    <organismsDiffer>false</organismsDiffer>
    <experiments>2</experiments>
</comment>
<comment type="interaction">
    <interactant intactId="EBI-719955">
        <id>Q96FE5</id>
    </interactant>
    <interactant intactId="EBI-11956479">
        <id>P23142-4</id>
        <label>FBLN1</label>
    </interactant>
    <organismsDiffer>false</organismsDiffer>
    <experiments>3</experiments>
</comment>
<comment type="interaction">
    <interactant intactId="EBI-719955">
        <id>Q96FE5</id>
    </interactant>
    <interactant intactId="EBI-725515">
        <id>O43559</id>
        <label>FRS3</label>
    </interactant>
    <organismsDiffer>false</organismsDiffer>
    <experiments>3</experiments>
</comment>
<comment type="interaction">
    <interactant intactId="EBI-719955">
        <id>Q96FE5</id>
    </interactant>
    <interactant intactId="EBI-618309">
        <id>Q08379</id>
        <label>GOLGA2</label>
    </interactant>
    <organismsDiffer>false</organismsDiffer>
    <experiments>3</experiments>
</comment>
<comment type="interaction">
    <interactant intactId="EBI-719955">
        <id>Q96FE5</id>
    </interactant>
    <interactant intactId="EBI-3918847">
        <id>Q9H2F3</id>
        <label>HSD3B7</label>
    </interactant>
    <organismsDiffer>false</organismsDiffer>
    <experiments>3</experiments>
</comment>
<comment type="interaction">
    <interactant intactId="EBI-719955">
        <id>Q96FE5</id>
    </interactant>
    <interactant intactId="EBI-10250562">
        <id>Q6L8G9</id>
        <label>KRTAP5-6</label>
    </interactant>
    <organismsDiffer>false</organismsDiffer>
    <experiments>3</experiments>
</comment>
<comment type="interaction">
    <interactant intactId="EBI-719955">
        <id>Q96FE5</id>
    </interactant>
    <interactant intactId="EBI-3958099">
        <id>P26371</id>
        <label>KRTAP5-9</label>
    </interactant>
    <organismsDiffer>false</organismsDiffer>
    <experiments>3</experiments>
</comment>
<comment type="interaction">
    <interactant intactId="EBI-719955">
        <id>Q96FE5</id>
    </interactant>
    <interactant intactId="EBI-1044640">
        <id>Q9BYQ4</id>
        <label>KRTAP9-2</label>
    </interactant>
    <organismsDiffer>false</organismsDiffer>
    <experiments>3</experiments>
</comment>
<comment type="interaction">
    <interactant intactId="EBI-719955">
        <id>Q96FE5</id>
    </interactant>
    <interactant intactId="EBI-2683507">
        <id>Q8N5G2</id>
        <label>MACO1</label>
    </interactant>
    <organismsDiffer>false</organismsDiffer>
    <experiments>3</experiments>
</comment>
<comment type="interaction">
    <interactant intactId="EBI-719955">
        <id>Q96FE5</id>
    </interactant>
    <interactant intactId="EBI-1387782">
        <id>P08138</id>
        <label>NGFR</label>
    </interactant>
    <organismsDiffer>false</organismsDiffer>
    <experiments>2</experiments>
</comment>
<comment type="interaction">
    <interactant intactId="EBI-719955">
        <id>Q96FE5</id>
    </interactant>
    <interactant intactId="EBI-12027160">
        <id>Q9P121-3</id>
        <label>NTM</label>
    </interactant>
    <organismsDiffer>false</organismsDiffer>
    <experiments>3</experiments>
</comment>
<comment type="interaction">
    <interactant intactId="EBI-719955">
        <id>Q96FE5</id>
    </interactant>
    <interactant intactId="EBI-413317">
        <id>Q96R06</id>
        <label>SPAG5</label>
    </interactant>
    <organismsDiffer>false</organismsDiffer>
    <experiments>3</experiments>
</comment>
<comment type="interaction">
    <interactant intactId="EBI-719955">
        <id>Q96FE5</id>
    </interactant>
    <interactant intactId="EBI-719493">
        <id>P14373</id>
        <label>TRIM27</label>
    </interactant>
    <organismsDiffer>false</organismsDiffer>
    <experiments>3</experiments>
</comment>
<comment type="interaction">
    <interactant intactId="EBI-719955">
        <id>Q96FE5</id>
    </interactant>
    <interactant intactId="EBI-7370412">
        <id>Q99M75</id>
        <label>Rtn4r</label>
    </interactant>
    <organismsDiffer>true</organismsDiffer>
    <experiments>2</experiments>
</comment>
<comment type="subcellular location">
    <subcellularLocation>
        <location evidence="1">Cell membrane</location>
        <topology evidence="1">Single-pass type I membrane protein</topology>
    </subcellularLocation>
</comment>
<comment type="alternative products">
    <event type="alternative splicing"/>
    <isoform>
        <id>Q96FE5-1</id>
        <name>1</name>
        <sequence type="displayed"/>
    </isoform>
    <isoform>
        <id>Q96FE5-2</id>
        <name>2</name>
        <sequence type="described" ref="VSP_032749"/>
    </isoform>
</comment>
<comment type="tissue specificity">
    <text evidence="4 7 9">Expressed exclusively in the central nervous system. Highest level in the in amygdala, hippocampus, thalamus and cerebral cortex. In the rest of the brain a basal expression seems to be always present. Up-regulated in substantia nigra neurons from Parkinson disease patients.</text>
</comment>
<comment type="domain">
    <text evidence="1">The intracellular domain of LINGO1 interacts with MYT1L.</text>
</comment>
<comment type="PTM">
    <text evidence="8">N-glycosylated. Contains predominantly high-mannose glycans.</text>
</comment>
<comment type="disease" evidence="11">
    <disease id="DI-05318">
        <name>Intellectual developmental disorder, autosomal recessive 64</name>
        <acronym>MRT64</acronym>
        <description>A disorder characterized by significantly below average general intellectual functioning associated with impairments in adaptive behavior and manifested during the developmental period. MRT64 patients have moderate to severe intellectual disability, delayed motor development, aggressive behavior, and slurred or absent speech.</description>
        <dbReference type="MIM" id="618103"/>
    </disease>
    <text>The disease is caused by variants affecting the gene represented in this entry.</text>
</comment>
<sequence length="620" mass="69876">MQVSKRMLAGGVRSMPSPLLACWQPILLLVLGSVLSGSATGCPPRCECSAQDRAVLCHRKRFVAVPEGIPTETRLLDLGKNRIKTLNQDEFASFPHLEELELNENIVSAVEPGAFNNLFNLRTLGLRSNRLKLIPLGVFTGLSNLTKLDISENKIVILLDYMFQDLYNLKSLEVGDNDLVYISHRAFSGLNSLEQLTLEKCNLTSIPTEALSHLHGLIVLRLRHLNINAIRDYSFKRLYRLKVLEISHWPYLDTMTPNCLYGLNLTSLSITHCNLTAVPYLAVRHLVYLRFLNLSYNPISTIEGSMLHELLRLQEIQLVGGQLAVVEPYAFRGLNYLRVLNVSGNQLTTLEESVFHSVGNLETLILDSNPLACDCRLLWVFRRRWRLNFNRQQPTCATPEFVQGKEFKDFPDVLLPNYFTCRRARIRDRKAQQVFVDEGHTVQFVCRADGDPPPAILWLSPRKHLVSAKSNGRLTVFPDGTLEVRYAQVQDNGTYLCIAANAGGNDSMPAHLHVRSYSPDWPHQPNKTFAFISNQPGEGEANSTRATVPFPFDIKTLIIATTMGFISFLGVVLFCLVLLFLWSRGKGNTKHNIEIEYVPRKSDAGISSADAPRKFNMKMI</sequence>
<dbReference type="EMBL" id="AY324320">
    <property type="protein sequence ID" value="AAQ97216.1"/>
    <property type="molecule type" value="mRNA"/>
</dbReference>
<dbReference type="EMBL" id="AY324322">
    <property type="protein sequence ID" value="AAQ97217.1"/>
    <property type="molecule type" value="mRNA"/>
</dbReference>
<dbReference type="EMBL" id="AY324323">
    <property type="protein sequence ID" value="AAQ97218.1"/>
    <property type="molecule type" value="mRNA"/>
</dbReference>
<dbReference type="EMBL" id="AY358284">
    <property type="protein sequence ID" value="AAQ88651.1"/>
    <property type="molecule type" value="mRNA"/>
</dbReference>
<dbReference type="EMBL" id="AK027500">
    <property type="protein sequence ID" value="BAB55157.1"/>
    <property type="molecule type" value="mRNA"/>
</dbReference>
<dbReference type="EMBL" id="AK291363">
    <property type="protein sequence ID" value="BAF84052.1"/>
    <property type="molecule type" value="mRNA"/>
</dbReference>
<dbReference type="EMBL" id="CH471136">
    <property type="protein sequence ID" value="EAW99195.1"/>
    <property type="molecule type" value="Genomic_DNA"/>
</dbReference>
<dbReference type="EMBL" id="CH471136">
    <property type="protein sequence ID" value="EAW99196.1"/>
    <property type="molecule type" value="Genomic_DNA"/>
</dbReference>
<dbReference type="EMBL" id="CH471136">
    <property type="protein sequence ID" value="EAW99197.1"/>
    <property type="molecule type" value="Genomic_DNA"/>
</dbReference>
<dbReference type="EMBL" id="CH471136">
    <property type="protein sequence ID" value="EAW99198.1"/>
    <property type="molecule type" value="Genomic_DNA"/>
</dbReference>
<dbReference type="EMBL" id="BC011057">
    <property type="protein sequence ID" value="AAH11057.2"/>
    <property type="molecule type" value="mRNA"/>
</dbReference>
<dbReference type="EMBL" id="BC068558">
    <property type="protein sequence ID" value="AAH68558.1"/>
    <property type="molecule type" value="mRNA"/>
</dbReference>
<dbReference type="EMBL" id="AL834260">
    <property type="protein sequence ID" value="CAD38935.1"/>
    <property type="molecule type" value="mRNA"/>
</dbReference>
<dbReference type="CCDS" id="CCDS45313.1">
    <molecule id="Q96FE5-1"/>
</dbReference>
<dbReference type="CCDS" id="CCDS73766.1">
    <molecule id="Q96FE5-2"/>
</dbReference>
<dbReference type="RefSeq" id="NP_001288115.1">
    <molecule id="Q96FE5-2"/>
    <property type="nucleotide sequence ID" value="NM_001301186.2"/>
</dbReference>
<dbReference type="RefSeq" id="NP_001288116.1">
    <molecule id="Q96FE5-2"/>
    <property type="nucleotide sequence ID" value="NM_001301187.2"/>
</dbReference>
<dbReference type="RefSeq" id="NP_001288118.1">
    <molecule id="Q96FE5-2"/>
    <property type="nucleotide sequence ID" value="NM_001301189.2"/>
</dbReference>
<dbReference type="RefSeq" id="NP_001288120.1">
    <molecule id="Q96FE5-2"/>
    <property type="nucleotide sequence ID" value="NM_001301191.2"/>
</dbReference>
<dbReference type="RefSeq" id="NP_001288121.1">
    <molecule id="Q96FE5-2"/>
    <property type="nucleotide sequence ID" value="NM_001301192.2"/>
</dbReference>
<dbReference type="RefSeq" id="NP_001288123.1">
    <molecule id="Q96FE5-2"/>
    <property type="nucleotide sequence ID" value="NM_001301194.2"/>
</dbReference>
<dbReference type="RefSeq" id="NP_001288124.1">
    <molecule id="Q96FE5-2"/>
    <property type="nucleotide sequence ID" value="NM_001301195.2"/>
</dbReference>
<dbReference type="RefSeq" id="NP_001288126.1">
    <molecule id="Q96FE5-2"/>
    <property type="nucleotide sequence ID" value="NM_001301197.2"/>
</dbReference>
<dbReference type="RefSeq" id="NP_001288127.1">
    <molecule id="Q96FE5-2"/>
    <property type="nucleotide sequence ID" value="NM_001301198.2"/>
</dbReference>
<dbReference type="RefSeq" id="NP_001288128.1">
    <molecule id="Q96FE5-2"/>
    <property type="nucleotide sequence ID" value="NM_001301199.2"/>
</dbReference>
<dbReference type="RefSeq" id="NP_001288129.1">
    <molecule id="Q96FE5-2"/>
    <property type="nucleotide sequence ID" value="NM_001301200.2"/>
</dbReference>
<dbReference type="RefSeq" id="NP_116197.4">
    <molecule id="Q96FE5-1"/>
    <property type="nucleotide sequence ID" value="NM_032808.6"/>
</dbReference>
<dbReference type="RefSeq" id="XP_011520420.1">
    <molecule id="Q96FE5-2"/>
    <property type="nucleotide sequence ID" value="XM_011522118.3"/>
</dbReference>
<dbReference type="RefSeq" id="XP_016878171.1">
    <molecule id="Q96FE5-2"/>
    <property type="nucleotide sequence ID" value="XM_017022682.2"/>
</dbReference>
<dbReference type="RefSeq" id="XP_024305859.1">
    <molecule id="Q96FE5-2"/>
    <property type="nucleotide sequence ID" value="XM_024450091.2"/>
</dbReference>
<dbReference type="RefSeq" id="XP_054234980.1">
    <molecule id="Q96FE5-2"/>
    <property type="nucleotide sequence ID" value="XM_054379005.1"/>
</dbReference>
<dbReference type="RefSeq" id="XP_054234981.1">
    <molecule id="Q96FE5-2"/>
    <property type="nucleotide sequence ID" value="XM_054379006.1"/>
</dbReference>
<dbReference type="RefSeq" id="XP_054234982.1">
    <molecule id="Q96FE5-2"/>
    <property type="nucleotide sequence ID" value="XM_054379007.1"/>
</dbReference>
<dbReference type="PDB" id="2ID5">
    <property type="method" value="X-ray"/>
    <property type="resolution" value="2.70 A"/>
    <property type="chains" value="A/B/C/D=40-516"/>
</dbReference>
<dbReference type="PDB" id="4OQT">
    <property type="method" value="X-ray"/>
    <property type="resolution" value="3.23 A"/>
    <property type="chains" value="A=40-517"/>
</dbReference>
<dbReference type="PDBsum" id="2ID5"/>
<dbReference type="PDBsum" id="4OQT"/>
<dbReference type="SMR" id="Q96FE5"/>
<dbReference type="BioGRID" id="124334">
    <property type="interactions" value="51"/>
</dbReference>
<dbReference type="CORUM" id="Q96FE5"/>
<dbReference type="DIP" id="DIP-60981N"/>
<dbReference type="FunCoup" id="Q96FE5">
    <property type="interactions" value="427"/>
</dbReference>
<dbReference type="IntAct" id="Q96FE5">
    <property type="interactions" value="51"/>
</dbReference>
<dbReference type="MINT" id="Q96FE5"/>
<dbReference type="STRING" id="9606.ENSP00000347451"/>
<dbReference type="ChEMBL" id="CHEMBL3712965"/>
<dbReference type="GuidetoPHARMACOLOGY" id="2882"/>
<dbReference type="TCDB" id="8.A.43.1.15">
    <property type="family name" value="the neat-domain containing methaemoglobin heme sequestration (n-mhs) family"/>
</dbReference>
<dbReference type="GlyConnect" id="1450">
    <property type="glycosylation" value="1 N-Linked glycan (1 site)"/>
</dbReference>
<dbReference type="GlyCosmos" id="Q96FE5">
    <property type="glycosylation" value="10 sites, No reported glycans"/>
</dbReference>
<dbReference type="GlyGen" id="Q96FE5">
    <property type="glycosylation" value="10 sites, 3 N-linked glycans (3 sites)"/>
</dbReference>
<dbReference type="iPTMnet" id="Q96FE5"/>
<dbReference type="PhosphoSitePlus" id="Q96FE5"/>
<dbReference type="BioMuta" id="LINGO1"/>
<dbReference type="DMDM" id="74760819"/>
<dbReference type="jPOST" id="Q96FE5"/>
<dbReference type="MassIVE" id="Q96FE5"/>
<dbReference type="PaxDb" id="9606-ENSP00000347451"/>
<dbReference type="PeptideAtlas" id="Q96FE5"/>
<dbReference type="ProteomicsDB" id="76516">
    <molecule id="Q96FE5-1"/>
</dbReference>
<dbReference type="ProteomicsDB" id="76517">
    <molecule id="Q96FE5-2"/>
</dbReference>
<dbReference type="ABCD" id="Q96FE5">
    <property type="antibodies" value="2 sequenced antibodies"/>
</dbReference>
<dbReference type="Antibodypedia" id="2624">
    <property type="antibodies" value="440 antibodies from 36 providers"/>
</dbReference>
<dbReference type="DNASU" id="84894"/>
<dbReference type="Ensembl" id="ENST00000355300.7">
    <molecule id="Q96FE5-1"/>
    <property type="protein sequence ID" value="ENSP00000347451.6"/>
    <property type="gene ID" value="ENSG00000169783.13"/>
</dbReference>
<dbReference type="Ensembl" id="ENST00000561030.5">
    <molecule id="Q96FE5-2"/>
    <property type="protein sequence ID" value="ENSP00000453853.1"/>
    <property type="gene ID" value="ENSG00000169783.13"/>
</dbReference>
<dbReference type="GeneID" id="84894"/>
<dbReference type="KEGG" id="hsa:84894"/>
<dbReference type="MANE-Select" id="ENST00000355300.7">
    <property type="protein sequence ID" value="ENSP00000347451.6"/>
    <property type="RefSeq nucleotide sequence ID" value="NM_032808.7"/>
    <property type="RefSeq protein sequence ID" value="NP_116197.4"/>
</dbReference>
<dbReference type="UCSC" id="uc002bct.2">
    <molecule id="Q96FE5-1"/>
    <property type="organism name" value="human"/>
</dbReference>
<dbReference type="AGR" id="HGNC:21205"/>
<dbReference type="CTD" id="84894"/>
<dbReference type="DisGeNET" id="84894"/>
<dbReference type="GeneCards" id="LINGO1"/>
<dbReference type="HGNC" id="HGNC:21205">
    <property type="gene designation" value="LINGO1"/>
</dbReference>
<dbReference type="HPA" id="ENSG00000169783">
    <property type="expression patterns" value="Tissue enriched (brain)"/>
</dbReference>
<dbReference type="MalaCards" id="LINGO1"/>
<dbReference type="MIM" id="609791">
    <property type="type" value="gene"/>
</dbReference>
<dbReference type="MIM" id="618103">
    <property type="type" value="phenotype"/>
</dbReference>
<dbReference type="neXtProt" id="NX_Q96FE5"/>
<dbReference type="OpenTargets" id="ENSG00000169783"/>
<dbReference type="PharmGKB" id="PA162394087"/>
<dbReference type="VEuPathDB" id="HostDB:ENSG00000169783"/>
<dbReference type="eggNOG" id="KOG0619">
    <property type="taxonomic scope" value="Eukaryota"/>
</dbReference>
<dbReference type="GeneTree" id="ENSGT00940000154996"/>
<dbReference type="HOGENOM" id="CLU_000288_18_24_1"/>
<dbReference type="InParanoid" id="Q96FE5"/>
<dbReference type="OMA" id="MVAREAT"/>
<dbReference type="OrthoDB" id="10061535at2759"/>
<dbReference type="PAN-GO" id="Q96FE5">
    <property type="GO annotations" value="3 GO annotations based on evolutionary models"/>
</dbReference>
<dbReference type="PhylomeDB" id="Q96FE5"/>
<dbReference type="TreeFam" id="TF334360"/>
<dbReference type="PathwayCommons" id="Q96FE5"/>
<dbReference type="Reactome" id="R-HSA-193634">
    <property type="pathway name" value="Axonal growth inhibition (RHOA activation)"/>
</dbReference>
<dbReference type="SignaLink" id="Q96FE5"/>
<dbReference type="SIGNOR" id="Q96FE5"/>
<dbReference type="BioGRID-ORCS" id="84894">
    <property type="hits" value="14 hits in 1141 CRISPR screens"/>
</dbReference>
<dbReference type="CD-CODE" id="FB4E32DD">
    <property type="entry name" value="Presynaptic clusters and postsynaptic densities"/>
</dbReference>
<dbReference type="ChiTaRS" id="LINGO1">
    <property type="organism name" value="human"/>
</dbReference>
<dbReference type="EvolutionaryTrace" id="Q96FE5"/>
<dbReference type="GeneWiki" id="LINGO1"/>
<dbReference type="GenomeRNAi" id="84894"/>
<dbReference type="Pharos" id="Q96FE5">
    <property type="development level" value="Tbio"/>
</dbReference>
<dbReference type="PRO" id="PR:Q96FE5"/>
<dbReference type="Proteomes" id="UP000005640">
    <property type="component" value="Chromosome 15"/>
</dbReference>
<dbReference type="RNAct" id="Q96FE5">
    <property type="molecule type" value="protein"/>
</dbReference>
<dbReference type="Bgee" id="ENSG00000169783">
    <property type="expression patterns" value="Expressed in cortical plate and 157 other cell types or tissues"/>
</dbReference>
<dbReference type="ExpressionAtlas" id="Q96FE5">
    <property type="expression patterns" value="baseline and differential"/>
</dbReference>
<dbReference type="GO" id="GO:0031012">
    <property type="term" value="C:extracellular matrix"/>
    <property type="evidence" value="ECO:0000318"/>
    <property type="project" value="GO_Central"/>
</dbReference>
<dbReference type="GO" id="GO:0005615">
    <property type="term" value="C:extracellular space"/>
    <property type="evidence" value="ECO:0000318"/>
    <property type="project" value="GO_Central"/>
</dbReference>
<dbReference type="GO" id="GO:0005886">
    <property type="term" value="C:plasma membrane"/>
    <property type="evidence" value="ECO:0000304"/>
    <property type="project" value="Reactome"/>
</dbReference>
<dbReference type="GO" id="GO:0005154">
    <property type="term" value="F:epidermal growth factor receptor binding"/>
    <property type="evidence" value="ECO:0000318"/>
    <property type="project" value="GO_Central"/>
</dbReference>
<dbReference type="CDD" id="cd20969">
    <property type="entry name" value="IgI_Lingo-1"/>
    <property type="match status" value="1"/>
</dbReference>
<dbReference type="FunFam" id="2.60.40.10:FF:000076">
    <property type="entry name" value="Leucine-rich repeat and Ig domain-containing 4"/>
    <property type="match status" value="1"/>
</dbReference>
<dbReference type="FunFam" id="3.80.10.10:FF:000014">
    <property type="entry name" value="Leucine-rich repeat and immunoglobulin-like domain-containing nogo receptor-interacting protein 1"/>
    <property type="match status" value="1"/>
</dbReference>
<dbReference type="Gene3D" id="2.60.40.10">
    <property type="entry name" value="Immunoglobulins"/>
    <property type="match status" value="1"/>
</dbReference>
<dbReference type="Gene3D" id="3.80.10.10">
    <property type="entry name" value="Ribonuclease Inhibitor"/>
    <property type="match status" value="1"/>
</dbReference>
<dbReference type="InterPro" id="IPR007110">
    <property type="entry name" value="Ig-like_dom"/>
</dbReference>
<dbReference type="InterPro" id="IPR036179">
    <property type="entry name" value="Ig-like_dom_sf"/>
</dbReference>
<dbReference type="InterPro" id="IPR013783">
    <property type="entry name" value="Ig-like_fold"/>
</dbReference>
<dbReference type="InterPro" id="IPR013098">
    <property type="entry name" value="Ig_I-set"/>
</dbReference>
<dbReference type="InterPro" id="IPR003599">
    <property type="entry name" value="Ig_sub"/>
</dbReference>
<dbReference type="InterPro" id="IPR003598">
    <property type="entry name" value="Ig_sub2"/>
</dbReference>
<dbReference type="InterPro" id="IPR001611">
    <property type="entry name" value="Leu-rich_rpt"/>
</dbReference>
<dbReference type="InterPro" id="IPR003591">
    <property type="entry name" value="Leu-rich_rpt_typical-subtyp"/>
</dbReference>
<dbReference type="InterPro" id="IPR032675">
    <property type="entry name" value="LRR_dom_sf"/>
</dbReference>
<dbReference type="InterPro" id="IPR050541">
    <property type="entry name" value="LRR_TM_domain-containing"/>
</dbReference>
<dbReference type="InterPro" id="IPR000372">
    <property type="entry name" value="LRRNT"/>
</dbReference>
<dbReference type="PANTHER" id="PTHR24369">
    <property type="entry name" value="ANTIGEN BSP, PUTATIVE-RELATED"/>
    <property type="match status" value="1"/>
</dbReference>
<dbReference type="PANTHER" id="PTHR24369:SF178">
    <property type="entry name" value="LEUCINE-RICH REPEAT AND IMMUNOGLOBULIN-LIKE DOMAIN-CONTAINING NOGO RECEPTOR-INTERACTING PROTEIN 1"/>
    <property type="match status" value="1"/>
</dbReference>
<dbReference type="Pfam" id="PF07679">
    <property type="entry name" value="I-set"/>
    <property type="match status" value="1"/>
</dbReference>
<dbReference type="Pfam" id="PF13855">
    <property type="entry name" value="LRR_8"/>
    <property type="match status" value="3"/>
</dbReference>
<dbReference type="SMART" id="SM00409">
    <property type="entry name" value="IG"/>
    <property type="match status" value="1"/>
</dbReference>
<dbReference type="SMART" id="SM00408">
    <property type="entry name" value="IGc2"/>
    <property type="match status" value="1"/>
</dbReference>
<dbReference type="SMART" id="SM00369">
    <property type="entry name" value="LRR_TYP"/>
    <property type="match status" value="9"/>
</dbReference>
<dbReference type="SMART" id="SM00013">
    <property type="entry name" value="LRRNT"/>
    <property type="match status" value="1"/>
</dbReference>
<dbReference type="SUPFAM" id="SSF48726">
    <property type="entry name" value="Immunoglobulin"/>
    <property type="match status" value="1"/>
</dbReference>
<dbReference type="SUPFAM" id="SSF52058">
    <property type="entry name" value="L domain-like"/>
    <property type="match status" value="1"/>
</dbReference>
<dbReference type="PROSITE" id="PS50835">
    <property type="entry name" value="IG_LIKE"/>
    <property type="match status" value="1"/>
</dbReference>
<dbReference type="PROSITE" id="PS51450">
    <property type="entry name" value="LRR"/>
    <property type="match status" value="10"/>
</dbReference>
<evidence type="ECO:0000250" key="1">
    <source>
        <dbReference type="UniProtKB" id="Q9D1T0"/>
    </source>
</evidence>
<evidence type="ECO:0000255" key="2"/>
<evidence type="ECO:0000255" key="3">
    <source>
        <dbReference type="PROSITE-ProRule" id="PRU00114"/>
    </source>
</evidence>
<evidence type="ECO:0000269" key="4">
    <source>
    </source>
</evidence>
<evidence type="ECO:0000269" key="5">
    <source>
    </source>
</evidence>
<evidence type="ECO:0000269" key="6">
    <source>
    </source>
</evidence>
<evidence type="ECO:0000269" key="7">
    <source>
    </source>
</evidence>
<evidence type="ECO:0000269" key="8">
    <source>
    </source>
</evidence>
<evidence type="ECO:0000269" key="9">
    <source>
    </source>
</evidence>
<evidence type="ECO:0000269" key="10">
    <source>
    </source>
</evidence>
<evidence type="ECO:0000269" key="11">
    <source>
    </source>
</evidence>
<evidence type="ECO:0000303" key="12">
    <source>
    </source>
</evidence>
<evidence type="ECO:0000305" key="13"/>
<evidence type="ECO:0007829" key="14">
    <source>
        <dbReference type="PDB" id="2ID5"/>
    </source>
</evidence>
<evidence type="ECO:0007829" key="15">
    <source>
        <dbReference type="PDB" id="4OQT"/>
    </source>
</evidence>
<accession>Q96FE5</accession>
<accession>D3DW80</accession>
<accession>Q6NUK3</accession>
<accession>Q6UXM3</accession>
<accession>Q6VVG0</accession>
<accession>Q6VVG1</accession>
<accession>Q6VVG2</accession>
<accession>Q8N3K5</accession>
<accession>Q96K52</accession>
<feature type="signal peptide" evidence="2">
    <location>
        <begin position="1"/>
        <end position="41"/>
    </location>
</feature>
<feature type="chain" id="PRO_0000328642" description="Leucine-rich repeat and immunoglobulin-like domain-containing nogo receptor-interacting protein 1">
    <location>
        <begin position="42"/>
        <end position="620"/>
    </location>
</feature>
<feature type="topological domain" description="Extracellular" evidence="2">
    <location>
        <begin position="42"/>
        <end position="561"/>
    </location>
</feature>
<feature type="transmembrane region" description="Helical" evidence="2">
    <location>
        <begin position="562"/>
        <end position="582"/>
    </location>
</feature>
<feature type="topological domain" description="Cytoplasmic" evidence="2">
    <location>
        <begin position="583"/>
        <end position="620"/>
    </location>
</feature>
<feature type="domain" description="LRRNT">
    <location>
        <begin position="42"/>
        <end position="71"/>
    </location>
</feature>
<feature type="repeat" description="LRR 1">
    <location>
        <begin position="72"/>
        <end position="93"/>
    </location>
</feature>
<feature type="repeat" description="LRR 2">
    <location>
        <begin position="96"/>
        <end position="117"/>
    </location>
</feature>
<feature type="repeat" description="LRR 3">
    <location>
        <begin position="120"/>
        <end position="141"/>
    </location>
</feature>
<feature type="repeat" description="LRR 4">
    <location>
        <begin position="144"/>
        <end position="165"/>
    </location>
</feature>
<feature type="repeat" description="LRR 5">
    <location>
        <begin position="168"/>
        <end position="189"/>
    </location>
</feature>
<feature type="repeat" description="LRR 6">
    <location>
        <begin position="192"/>
        <end position="213"/>
    </location>
</feature>
<feature type="repeat" description="LRR 7">
    <location>
        <begin position="216"/>
        <end position="237"/>
    </location>
</feature>
<feature type="repeat" description="LRR 8">
    <location>
        <begin position="264"/>
        <end position="285"/>
    </location>
</feature>
<feature type="repeat" description="LRR 9">
    <location>
        <begin position="288"/>
        <end position="309"/>
    </location>
</feature>
<feature type="repeat" description="LRR 10">
    <location>
        <begin position="312"/>
        <end position="333"/>
    </location>
</feature>
<feature type="repeat" description="LRR 11">
    <location>
        <begin position="336"/>
        <end position="357"/>
    </location>
</feature>
<feature type="domain" description="LRRCT">
    <location>
        <begin position="369"/>
        <end position="423"/>
    </location>
</feature>
<feature type="domain" description="Ig-like C2-type">
    <location>
        <begin position="411"/>
        <end position="513"/>
    </location>
</feature>
<feature type="modified residue" description="Phosphoserine" evidence="1">
    <location>
        <position position="602"/>
    </location>
</feature>
<feature type="glycosylation site" description="N-linked (GlcNAc...) asparagine" evidence="8">
    <location>
        <position position="144"/>
    </location>
</feature>
<feature type="glycosylation site" description="N-linked (GlcNAc...) asparagine" evidence="8">
    <location>
        <position position="202"/>
    </location>
</feature>
<feature type="glycosylation site" description="N-linked (GlcNAc...) asparagine" evidence="8">
    <location>
        <position position="264"/>
    </location>
</feature>
<feature type="glycosylation site" description="N-linked (GlcNAc...) asparagine" evidence="8">
    <location>
        <position position="274"/>
    </location>
</feature>
<feature type="glycosylation site" description="N-linked (GlcNAc...) asparagine" evidence="8">
    <location>
        <position position="293"/>
    </location>
</feature>
<feature type="glycosylation site" description="N-linked (GlcNAc...) asparagine" evidence="8">
    <location>
        <position position="341"/>
    </location>
</feature>
<feature type="glycosylation site" description="N-linked (GlcNAc...) asparagine" evidence="8">
    <location>
        <position position="492"/>
    </location>
</feature>
<feature type="glycosylation site" description="N-linked (GlcNAc...) asparagine" evidence="2">
    <location>
        <position position="505"/>
    </location>
</feature>
<feature type="glycosylation site" description="N-linked (GlcNAc...) asparagine" evidence="2">
    <location>
        <position position="526"/>
    </location>
</feature>
<feature type="glycosylation site" description="N-linked (GlcNAc...) asparagine" evidence="2">
    <location>
        <position position="542"/>
    </location>
</feature>
<feature type="disulfide bond" evidence="3 8">
    <location>
        <begin position="42"/>
        <end position="48"/>
    </location>
</feature>
<feature type="disulfide bond" evidence="3 8">
    <location>
        <begin position="46"/>
        <end position="57"/>
    </location>
</feature>
<feature type="disulfide bond" evidence="3 8">
    <location>
        <begin position="373"/>
        <end position="396"/>
    </location>
</feature>
<feature type="disulfide bond" evidence="3 8">
    <location>
        <begin position="375"/>
        <end position="421"/>
    </location>
</feature>
<feature type="disulfide bond" evidence="3 8">
    <location>
        <begin position="446"/>
        <end position="497"/>
    </location>
</feature>
<feature type="splice variant" id="VSP_032749" description="In isoform 2." evidence="12">
    <location>
        <begin position="1"/>
        <end position="6"/>
    </location>
</feature>
<feature type="sequence variant" id="VAR_042436" description="In dbSNP:rs9855." evidence="4">
    <original>S</original>
    <variation>F</variation>
    <location>
        <position position="183"/>
    </location>
</feature>
<feature type="sequence variant" id="VAR_081164" description="In MRT64; dbSNP:rs750612085." evidence="11">
    <original>Y</original>
    <variation>C</variation>
    <location>
        <position position="288"/>
    </location>
</feature>
<feature type="sequence variant" id="VAR_081165" description="In MRT64; dbSNP:rs757077698." evidence="11">
    <original>R</original>
    <variation>H</variation>
    <location>
        <position position="290"/>
    </location>
</feature>
<feature type="sequence conflict" description="In Ref. 5; AAH68558." evidence="13" ref="5">
    <original>C</original>
    <variation>Y</variation>
    <location>
        <position position="46"/>
    </location>
</feature>
<feature type="sequence conflict" description="In Ref. 2; AAQ88651." evidence="13" ref="2">
    <original>R</original>
    <variation>C</variation>
    <location>
        <position position="61"/>
    </location>
</feature>
<feature type="sequence conflict" description="In Ref. 2; AAQ88651." evidence="13" ref="2">
    <original>L</original>
    <variation>Q</variation>
    <location>
        <position position="148"/>
    </location>
</feature>
<feature type="sequence conflict" description="In Ref. 5; AAH68558." evidence="13" ref="5">
    <original>K</original>
    <variation>R</variation>
    <location>
        <position position="170"/>
    </location>
</feature>
<feature type="sequence conflict" description="In Ref. 5; AAH68558." evidence="13" ref="5">
    <original>P</original>
    <variation>R</variation>
    <location>
        <position position="298"/>
    </location>
</feature>
<feature type="sequence conflict" description="In Ref. 3; BAB55157." evidence="13" ref="3">
    <original>S</original>
    <variation>L</variation>
    <location>
        <position position="353"/>
    </location>
</feature>
<feature type="strand" evidence="14">
    <location>
        <begin position="47"/>
        <end position="49"/>
    </location>
</feature>
<feature type="turn" evidence="14">
    <location>
        <begin position="50"/>
        <end position="53"/>
    </location>
</feature>
<feature type="strand" evidence="14">
    <location>
        <begin position="54"/>
        <end position="56"/>
    </location>
</feature>
<feature type="strand" evidence="14">
    <location>
        <begin position="74"/>
        <end position="77"/>
    </location>
</feature>
<feature type="turn" evidence="14">
    <location>
        <begin position="88"/>
        <end position="93"/>
    </location>
</feature>
<feature type="strand" evidence="14">
    <location>
        <begin position="99"/>
        <end position="101"/>
    </location>
</feature>
<feature type="turn" evidence="14">
    <location>
        <begin position="112"/>
        <end position="117"/>
    </location>
</feature>
<feature type="strand" evidence="14">
    <location>
        <begin position="123"/>
        <end position="125"/>
    </location>
</feature>
<feature type="strand" evidence="14">
    <location>
        <begin position="147"/>
        <end position="149"/>
    </location>
</feature>
<feature type="turn" evidence="14">
    <location>
        <begin position="160"/>
        <end position="165"/>
    </location>
</feature>
<feature type="strand" evidence="14">
    <location>
        <begin position="171"/>
        <end position="174"/>
    </location>
</feature>
<feature type="strand" evidence="14">
    <location>
        <begin position="195"/>
        <end position="200"/>
    </location>
</feature>
<feature type="helix" evidence="14">
    <location>
        <begin position="208"/>
        <end position="211"/>
    </location>
</feature>
<feature type="strand" evidence="14">
    <location>
        <begin position="219"/>
        <end position="224"/>
    </location>
</feature>
<feature type="strand" evidence="14">
    <location>
        <begin position="243"/>
        <end position="247"/>
    </location>
</feature>
<feature type="turn" evidence="14">
    <location>
        <begin position="257"/>
        <end position="262"/>
    </location>
</feature>
<feature type="strand" evidence="14">
    <location>
        <begin position="266"/>
        <end position="273"/>
    </location>
</feature>
<feature type="helix" evidence="14">
    <location>
        <begin position="280"/>
        <end position="283"/>
    </location>
</feature>
<feature type="strand" evidence="14">
    <location>
        <begin position="291"/>
        <end position="293"/>
    </location>
</feature>
<feature type="strand" evidence="14">
    <location>
        <begin position="315"/>
        <end position="317"/>
    </location>
</feature>
<feature type="strand" evidence="14">
    <location>
        <begin position="324"/>
        <end position="326"/>
    </location>
</feature>
<feature type="turn" evidence="14">
    <location>
        <begin position="328"/>
        <end position="330"/>
    </location>
</feature>
<feature type="strand" evidence="14">
    <location>
        <begin position="339"/>
        <end position="341"/>
    </location>
</feature>
<feature type="helix" evidence="14">
    <location>
        <begin position="352"/>
        <end position="354"/>
    </location>
</feature>
<feature type="helix" evidence="14">
    <location>
        <begin position="358"/>
        <end position="360"/>
    </location>
</feature>
<feature type="strand" evidence="14">
    <location>
        <begin position="363"/>
        <end position="365"/>
    </location>
</feature>
<feature type="helix" evidence="14">
    <location>
        <begin position="375"/>
        <end position="377"/>
    </location>
</feature>
<feature type="helix" evidence="14">
    <location>
        <begin position="378"/>
        <end position="381"/>
    </location>
</feature>
<feature type="turn" evidence="14">
    <location>
        <begin position="382"/>
        <end position="385"/>
    </location>
</feature>
<feature type="strand" evidence="14">
    <location>
        <begin position="395"/>
        <end position="399"/>
    </location>
</feature>
<feature type="helix" evidence="14">
    <location>
        <begin position="400"/>
        <end position="402"/>
    </location>
</feature>
<feature type="helix" evidence="14">
    <location>
        <begin position="407"/>
        <end position="409"/>
    </location>
</feature>
<feature type="turn" evidence="15">
    <location>
        <begin position="416"/>
        <end position="419"/>
    </location>
</feature>
<feature type="strand" evidence="14">
    <location>
        <begin position="422"/>
        <end position="427"/>
    </location>
</feature>
<feature type="strand" evidence="14">
    <location>
        <begin position="432"/>
        <end position="437"/>
    </location>
</feature>
<feature type="strand" evidence="14">
    <location>
        <begin position="442"/>
        <end position="444"/>
    </location>
</feature>
<feature type="strand" evidence="14">
    <location>
        <begin position="448"/>
        <end position="452"/>
    </location>
</feature>
<feature type="strand" evidence="14">
    <location>
        <begin position="455"/>
        <end position="459"/>
    </location>
</feature>
<feature type="strand" evidence="15">
    <location>
        <begin position="472"/>
        <end position="476"/>
    </location>
</feature>
<feature type="strand" evidence="14">
    <location>
        <begin position="482"/>
        <end position="486"/>
    </location>
</feature>
<feature type="helix" evidence="15">
    <location>
        <begin position="489"/>
        <end position="491"/>
    </location>
</feature>
<feature type="strand" evidence="14">
    <location>
        <begin position="493"/>
        <end position="501"/>
    </location>
</feature>
<feature type="strand" evidence="14">
    <location>
        <begin position="504"/>
        <end position="515"/>
    </location>
</feature>
<name>LIGO1_HUMAN</name>
<reference key="1">
    <citation type="journal article" date="2003" name="Eur. J. Neurosci.">
        <title>LRRN6A/LERN1 (leucine-rich repeat neuronal protein 1), a novel gene with enriched expression in limbic system and neocortex.</title>
        <authorList>
            <person name="Carim-Todd L."/>
            <person name="Escarceller M."/>
            <person name="Estivill X."/>
            <person name="Sumoy L."/>
        </authorList>
    </citation>
    <scope>NUCLEOTIDE SEQUENCE [MRNA] (ISOFORM 1)</scope>
    <scope>TISSUE SPECIFICITY</scope>
    <scope>VARIANT PHE-183</scope>
</reference>
<reference key="2">
    <citation type="journal article" date="2003" name="Genome Res.">
        <title>The secreted protein discovery initiative (SPDI), a large-scale effort to identify novel human secreted and transmembrane proteins: a bioinformatics assessment.</title>
        <authorList>
            <person name="Clark H.F."/>
            <person name="Gurney A.L."/>
            <person name="Abaya E."/>
            <person name="Baker K."/>
            <person name="Baldwin D.T."/>
            <person name="Brush J."/>
            <person name="Chen J."/>
            <person name="Chow B."/>
            <person name="Chui C."/>
            <person name="Crowley C."/>
            <person name="Currell B."/>
            <person name="Deuel B."/>
            <person name="Dowd P."/>
            <person name="Eaton D."/>
            <person name="Foster J.S."/>
            <person name="Grimaldi C."/>
            <person name="Gu Q."/>
            <person name="Hass P.E."/>
            <person name="Heldens S."/>
            <person name="Huang A."/>
            <person name="Kim H.S."/>
            <person name="Klimowski L."/>
            <person name="Jin Y."/>
            <person name="Johnson S."/>
            <person name="Lee J."/>
            <person name="Lewis L."/>
            <person name="Liao D."/>
            <person name="Mark M.R."/>
            <person name="Robbie E."/>
            <person name="Sanchez C."/>
            <person name="Schoenfeld J."/>
            <person name="Seshagiri S."/>
            <person name="Simmons L."/>
            <person name="Singh J."/>
            <person name="Smith V."/>
            <person name="Stinson J."/>
            <person name="Vagts A."/>
            <person name="Vandlen R.L."/>
            <person name="Watanabe C."/>
            <person name="Wieand D."/>
            <person name="Woods K."/>
            <person name="Xie M.-H."/>
            <person name="Yansura D.G."/>
            <person name="Yi S."/>
            <person name="Yu G."/>
            <person name="Yuan J."/>
            <person name="Zhang M."/>
            <person name="Zhang Z."/>
            <person name="Goddard A.D."/>
            <person name="Wood W.I."/>
            <person name="Godowski P.J."/>
            <person name="Gray A.M."/>
        </authorList>
    </citation>
    <scope>NUCLEOTIDE SEQUENCE [LARGE SCALE MRNA] (ISOFORM 1)</scope>
</reference>
<reference key="3">
    <citation type="journal article" date="2004" name="Nat. Genet.">
        <title>Complete sequencing and characterization of 21,243 full-length human cDNAs.</title>
        <authorList>
            <person name="Ota T."/>
            <person name="Suzuki Y."/>
            <person name="Nishikawa T."/>
            <person name="Otsuki T."/>
            <person name="Sugiyama T."/>
            <person name="Irie R."/>
            <person name="Wakamatsu A."/>
            <person name="Hayashi K."/>
            <person name="Sato H."/>
            <person name="Nagai K."/>
            <person name="Kimura K."/>
            <person name="Makita H."/>
            <person name="Sekine M."/>
            <person name="Obayashi M."/>
            <person name="Nishi T."/>
            <person name="Shibahara T."/>
            <person name="Tanaka T."/>
            <person name="Ishii S."/>
            <person name="Yamamoto J."/>
            <person name="Saito K."/>
            <person name="Kawai Y."/>
            <person name="Isono Y."/>
            <person name="Nakamura Y."/>
            <person name="Nagahari K."/>
            <person name="Murakami K."/>
            <person name="Yasuda T."/>
            <person name="Iwayanagi T."/>
            <person name="Wagatsuma M."/>
            <person name="Shiratori A."/>
            <person name="Sudo H."/>
            <person name="Hosoiri T."/>
            <person name="Kaku Y."/>
            <person name="Kodaira H."/>
            <person name="Kondo H."/>
            <person name="Sugawara M."/>
            <person name="Takahashi M."/>
            <person name="Kanda K."/>
            <person name="Yokoi T."/>
            <person name="Furuya T."/>
            <person name="Kikkawa E."/>
            <person name="Omura Y."/>
            <person name="Abe K."/>
            <person name="Kamihara K."/>
            <person name="Katsuta N."/>
            <person name="Sato K."/>
            <person name="Tanikawa M."/>
            <person name="Yamazaki M."/>
            <person name="Ninomiya K."/>
            <person name="Ishibashi T."/>
            <person name="Yamashita H."/>
            <person name="Murakawa K."/>
            <person name="Fujimori K."/>
            <person name="Tanai H."/>
            <person name="Kimata M."/>
            <person name="Watanabe M."/>
            <person name="Hiraoka S."/>
            <person name="Chiba Y."/>
            <person name="Ishida S."/>
            <person name="Ono Y."/>
            <person name="Takiguchi S."/>
            <person name="Watanabe S."/>
            <person name="Yosida M."/>
            <person name="Hotuta T."/>
            <person name="Kusano J."/>
            <person name="Kanehori K."/>
            <person name="Takahashi-Fujii A."/>
            <person name="Hara H."/>
            <person name="Tanase T.-O."/>
            <person name="Nomura Y."/>
            <person name="Togiya S."/>
            <person name="Komai F."/>
            <person name="Hara R."/>
            <person name="Takeuchi K."/>
            <person name="Arita M."/>
            <person name="Imose N."/>
            <person name="Musashino K."/>
            <person name="Yuuki H."/>
            <person name="Oshima A."/>
            <person name="Sasaki N."/>
            <person name="Aotsuka S."/>
            <person name="Yoshikawa Y."/>
            <person name="Matsunawa H."/>
            <person name="Ichihara T."/>
            <person name="Shiohata N."/>
            <person name="Sano S."/>
            <person name="Moriya S."/>
            <person name="Momiyama H."/>
            <person name="Satoh N."/>
            <person name="Takami S."/>
            <person name="Terashima Y."/>
            <person name="Suzuki O."/>
            <person name="Nakagawa S."/>
            <person name="Senoh A."/>
            <person name="Mizoguchi H."/>
            <person name="Goto Y."/>
            <person name="Shimizu F."/>
            <person name="Wakebe H."/>
            <person name="Hishigaki H."/>
            <person name="Watanabe T."/>
            <person name="Sugiyama A."/>
            <person name="Takemoto M."/>
            <person name="Kawakami B."/>
            <person name="Yamazaki M."/>
            <person name="Watanabe K."/>
            <person name="Kumagai A."/>
            <person name="Itakura S."/>
            <person name="Fukuzumi Y."/>
            <person name="Fujimori Y."/>
            <person name="Komiyama M."/>
            <person name="Tashiro H."/>
            <person name="Tanigami A."/>
            <person name="Fujiwara T."/>
            <person name="Ono T."/>
            <person name="Yamada K."/>
            <person name="Fujii Y."/>
            <person name="Ozaki K."/>
            <person name="Hirao M."/>
            <person name="Ohmori Y."/>
            <person name="Kawabata A."/>
            <person name="Hikiji T."/>
            <person name="Kobatake N."/>
            <person name="Inagaki H."/>
            <person name="Ikema Y."/>
            <person name="Okamoto S."/>
            <person name="Okitani R."/>
            <person name="Kawakami T."/>
            <person name="Noguchi S."/>
            <person name="Itoh T."/>
            <person name="Shigeta K."/>
            <person name="Senba T."/>
            <person name="Matsumura K."/>
            <person name="Nakajima Y."/>
            <person name="Mizuno T."/>
            <person name="Morinaga M."/>
            <person name="Sasaki M."/>
            <person name="Togashi T."/>
            <person name="Oyama M."/>
            <person name="Hata H."/>
            <person name="Watanabe M."/>
            <person name="Komatsu T."/>
            <person name="Mizushima-Sugano J."/>
            <person name="Satoh T."/>
            <person name="Shirai Y."/>
            <person name="Takahashi Y."/>
            <person name="Nakagawa K."/>
            <person name="Okumura K."/>
            <person name="Nagase T."/>
            <person name="Nomura N."/>
            <person name="Kikuchi H."/>
            <person name="Masuho Y."/>
            <person name="Yamashita R."/>
            <person name="Nakai K."/>
            <person name="Yada T."/>
            <person name="Nakamura Y."/>
            <person name="Ohara O."/>
            <person name="Isogai T."/>
            <person name="Sugano S."/>
        </authorList>
    </citation>
    <scope>NUCLEOTIDE SEQUENCE [LARGE SCALE MRNA] (ISOFORM 1)</scope>
    <source>
        <tissue>Brain</tissue>
    </source>
</reference>
<reference key="4">
    <citation type="submission" date="2005-09" db="EMBL/GenBank/DDBJ databases">
        <authorList>
            <person name="Mural R.J."/>
            <person name="Istrail S."/>
            <person name="Sutton G.G."/>
            <person name="Florea L."/>
            <person name="Halpern A.L."/>
            <person name="Mobarry C.M."/>
            <person name="Lippert R."/>
            <person name="Walenz B."/>
            <person name="Shatkay H."/>
            <person name="Dew I."/>
            <person name="Miller J.R."/>
            <person name="Flanigan M.J."/>
            <person name="Edwards N.J."/>
            <person name="Bolanos R."/>
            <person name="Fasulo D."/>
            <person name="Halldorsson B.V."/>
            <person name="Hannenhalli S."/>
            <person name="Turner R."/>
            <person name="Yooseph S."/>
            <person name="Lu F."/>
            <person name="Nusskern D.R."/>
            <person name="Shue B.C."/>
            <person name="Zheng X.H."/>
            <person name="Zhong F."/>
            <person name="Delcher A.L."/>
            <person name="Huson D.H."/>
            <person name="Kravitz S.A."/>
            <person name="Mouchard L."/>
            <person name="Reinert K."/>
            <person name="Remington K.A."/>
            <person name="Clark A.G."/>
            <person name="Waterman M.S."/>
            <person name="Eichler E.E."/>
            <person name="Adams M.D."/>
            <person name="Hunkapiller M.W."/>
            <person name="Myers E.W."/>
            <person name="Venter J.C."/>
        </authorList>
    </citation>
    <scope>NUCLEOTIDE SEQUENCE [LARGE SCALE GENOMIC DNA]</scope>
</reference>
<reference key="5">
    <citation type="journal article" date="2004" name="Genome Res.">
        <title>The status, quality, and expansion of the NIH full-length cDNA project: the Mammalian Gene Collection (MGC).</title>
        <authorList>
            <consortium name="The MGC Project Team"/>
        </authorList>
    </citation>
    <scope>NUCLEOTIDE SEQUENCE [LARGE SCALE MRNA] (ISOFORMS 1 AND 2)</scope>
    <source>
        <tissue>Brain</tissue>
    </source>
</reference>
<reference key="6">
    <citation type="journal article" date="2007" name="BMC Genomics">
        <title>The full-ORF clone resource of the German cDNA consortium.</title>
        <authorList>
            <person name="Bechtel S."/>
            <person name="Rosenfelder H."/>
            <person name="Duda A."/>
            <person name="Schmidt C.P."/>
            <person name="Ernst U."/>
            <person name="Wellenreuther R."/>
            <person name="Mehrle A."/>
            <person name="Schuster C."/>
            <person name="Bahr A."/>
            <person name="Bloecker H."/>
            <person name="Heubner D."/>
            <person name="Hoerlein A."/>
            <person name="Michel G."/>
            <person name="Wedler H."/>
            <person name="Koehrer K."/>
            <person name="Ottenwaelder B."/>
            <person name="Poustka A."/>
            <person name="Wiemann S."/>
            <person name="Schupp I."/>
        </authorList>
    </citation>
    <scope>NUCLEOTIDE SEQUENCE [LARGE SCALE MRNA] OF 44-620</scope>
    <source>
        <tissue>Amygdala</tissue>
    </source>
</reference>
<reference key="7">
    <citation type="journal article" date="2004" name="Nat. Neurosci.">
        <title>LINGO-1 is a component of the Nogo-66 receptor/p75 signaling complex.</title>
        <authorList>
            <person name="Mi S."/>
            <person name="Lee X."/>
            <person name="Shao Z."/>
            <person name="Thill G."/>
            <person name="Ji B."/>
            <person name="Relton J."/>
            <person name="Levesque M."/>
            <person name="Allaire N."/>
            <person name="Perrin S."/>
            <person name="Sands B."/>
            <person name="Crowell T."/>
            <person name="Cate R.L."/>
            <person name="McCoy J.M."/>
            <person name="Pepinsky R.B."/>
        </authorList>
    </citation>
    <scope>FUNCTION</scope>
    <scope>INTERACTION WITH NGFR AND RTN4R</scope>
</reference>
<reference key="8">
    <citation type="journal article" date="2005" name="Nat. Neurosci.">
        <title>LINGO-1 negatively regulates myelination by oligodendrocytes.</title>
        <authorList>
            <person name="Mi S."/>
            <person name="Miller R.H."/>
            <person name="Lee X."/>
            <person name="Scott M.L."/>
            <person name="Shulag-Morskaya S."/>
            <person name="Shao Z."/>
            <person name="Chang J."/>
            <person name="Thill G."/>
            <person name="Levesque M."/>
            <person name="Zhang M."/>
            <person name="Hession C."/>
            <person name="Sah D."/>
            <person name="Trapp B."/>
            <person name="He Z."/>
            <person name="Jung V."/>
            <person name="McCoy J.M."/>
            <person name="Pepinsky R.B."/>
        </authorList>
    </citation>
    <scope>TISSUE SPECIFICITY</scope>
    <scope>FUNCTION</scope>
</reference>
<reference key="9">
    <citation type="journal article" date="2005" name="Neuron">
        <title>A TNF receptor family member, TROY, is a coreceptor with Nogo receptor in mediating the inhibitory activity of myelin inhibitors.</title>
        <authorList>
            <person name="Park J.B."/>
            <person name="Yiu G."/>
            <person name="Kaneko S."/>
            <person name="Wang J."/>
            <person name="Chang J."/>
            <person name="He X.L."/>
            <person name="Garcia K.C."/>
            <person name="He Z."/>
        </authorList>
    </citation>
    <scope>INTERACTION WITH TNFRSF19</scope>
    <scope>FUNCTION</scope>
</reference>
<reference key="10">
    <citation type="journal article" date="2007" name="Proc. Natl. Acad. Sci. U.S.A.">
        <title>Inhibition of the leucine-rich repeat protein LINGO-1 enhances survival, structure, and function of dopaminergic neurons in Parkinson's disease models.</title>
        <authorList>
            <person name="Inoue H."/>
            <person name="Lin L."/>
            <person name="Lee X."/>
            <person name="Shao Z."/>
            <person name="Mendes S."/>
            <person name="Snodgrass-Belt P."/>
            <person name="Sweigard H."/>
            <person name="Engber T."/>
            <person name="Pepinsky B."/>
            <person name="Yang L."/>
            <person name="Beal M.F."/>
            <person name="Mi S."/>
            <person name="Isacson O."/>
        </authorList>
    </citation>
    <scope>TISSUE SPECIFICITY</scope>
</reference>
<reference key="11">
    <citation type="journal article" date="2008" name="J. Neurosci.">
        <title>Genetic variants of Nogo-66 receptor with possible association to schizophrenia block myelin inhibition of axon growth.</title>
        <authorList>
            <person name="Budel S."/>
            <person name="Padukkavidana T."/>
            <person name="Liu B.P."/>
            <person name="Feng Z."/>
            <person name="Hu F."/>
            <person name="Johnson S."/>
            <person name="Lauren J."/>
            <person name="Park J.H."/>
            <person name="McGee A.W."/>
            <person name="Liao J."/>
            <person name="Stillman A."/>
            <person name="Kim J.E."/>
            <person name="Yang B.Z."/>
            <person name="Sodi S."/>
            <person name="Gelernter J."/>
            <person name="Zhao H."/>
            <person name="Hisama F."/>
            <person name="Arnsten A.F."/>
            <person name="Strittmatter S.M."/>
        </authorList>
    </citation>
    <scope>INTERACTION WITH RTN4R</scope>
</reference>
<reference key="12">
    <citation type="journal article" date="2018" name="Genet. Med.">
        <title>Biallelic variants in LINGO1 are associated with autosomal recessive intellectual disability, microcephaly, speech and motor delay.</title>
        <authorList>
            <person name="Ansar M."/>
            <person name="Riazuddin S."/>
            <person name="Sarwar M.T."/>
            <person name="Makrythanasis P."/>
            <person name="Paracha S.A."/>
            <person name="Iqbal Z."/>
            <person name="Khan J."/>
            <person name="Assir M.Z."/>
            <person name="Hussain M."/>
            <person name="Razzaq A."/>
            <person name="Polla D.L."/>
            <person name="Taj A.S."/>
            <person name="Holmgren A."/>
            <person name="Batool N."/>
            <person name="Misceo D."/>
            <person name="Iwaszkiewicz J."/>
            <person name="de Brouwer A.P.M."/>
            <person name="Guipponi M."/>
            <person name="Hanquinet S."/>
            <person name="Zoete V."/>
            <person name="Santoni F.A."/>
            <person name="Frengen E."/>
            <person name="Ahmed J."/>
            <person name="Riazuddin S."/>
            <person name="van Bokhoven H."/>
            <person name="Antonarakis S.E."/>
        </authorList>
    </citation>
    <scope>INVOLVEMENT IN MRT64</scope>
    <scope>VARIANTS MRT64 CYS-288 AND HIS-290</scope>
</reference>
<reference key="13">
    <citation type="journal article" date="2006" name="J. Biol. Chem.">
        <title>The structure of the Lingo-1 ectodomain, a module implicated in central nervous system repair inhibition.</title>
        <authorList>
            <person name="Mosyak L."/>
            <person name="Wood A."/>
            <person name="Dwyer B."/>
            <person name="Buddha M."/>
            <person name="Johnson M."/>
            <person name="Aulabaugh A."/>
            <person name="Zhong X."/>
            <person name="Presman E."/>
            <person name="Benard S."/>
            <person name="Kelleher K."/>
            <person name="Wilhelm J."/>
            <person name="Stahl M.L."/>
            <person name="Kriz R."/>
            <person name="Gao Y."/>
            <person name="Cao Z."/>
            <person name="Ling H.P."/>
            <person name="Pangalos M.N."/>
            <person name="Walsh F.S."/>
            <person name="Somers W.S."/>
        </authorList>
    </citation>
    <scope>X-RAY CRYSTALLOGRAPHY (2.7 ANGSTROMS) OF 40-516</scope>
    <scope>FUNCTION</scope>
    <scope>SUBUNIT</scope>
    <scope>INTERACTION WITH NGFR AND RTN4R</scope>
    <scope>DISULFIDE BONDS</scope>
    <scope>IDENTIFICATION BY MASS SPECTROMETRY</scope>
    <scope>GLYCOSYLATION AT ASN-144; ASN-202; ASN-264; ASN-274; ASN-293; ASN-341 AND ASN-492</scope>
</reference>
<protein>
    <recommendedName>
        <fullName>Leucine-rich repeat and immunoglobulin-like domain-containing nogo receptor-interacting protein 1</fullName>
    </recommendedName>
    <alternativeName>
        <fullName>Leucine-rich repeat and immunoglobulin domain-containing protein 1</fullName>
    </alternativeName>
    <alternativeName>
        <fullName>Leucine-rich repeat neuronal protein 1</fullName>
    </alternativeName>
    <alternativeName>
        <fullName>Leucine-rich repeat neuronal protein 6A</fullName>
    </alternativeName>
</protein>